<evidence type="ECO:0000255" key="1">
    <source>
        <dbReference type="HAMAP-Rule" id="MF_00522"/>
    </source>
</evidence>
<gene>
    <name evidence="1" type="primary">psaJ</name>
</gene>
<comment type="function">
    <text evidence="1">May help in the organization of the PsaE and PsaF subunits.</text>
</comment>
<comment type="subcellular location">
    <subcellularLocation>
        <location evidence="1">Plastid</location>
        <location evidence="1">Chloroplast thylakoid membrane</location>
        <topology evidence="1">Single-pass membrane protein</topology>
    </subcellularLocation>
</comment>
<comment type="similarity">
    <text evidence="1">Belongs to the PsaJ family.</text>
</comment>
<protein>
    <recommendedName>
        <fullName evidence="1">Photosystem I reaction center subunit IX</fullName>
    </recommendedName>
    <alternativeName>
        <fullName evidence="1">PSI-J</fullName>
    </alternativeName>
</protein>
<accession>A4QKC5</accession>
<reference key="1">
    <citation type="submission" date="2007-03" db="EMBL/GenBank/DDBJ databases">
        <title>Sequencing analysis of Barbarea verna chloroplast DNA.</title>
        <authorList>
            <person name="Hosouchi T."/>
            <person name="Tsuruoka H."/>
            <person name="Kotani H."/>
        </authorList>
    </citation>
    <scope>NUCLEOTIDE SEQUENCE [LARGE SCALE GENOMIC DNA]</scope>
</reference>
<name>PSAJ_BARVE</name>
<keyword id="KW-0150">Chloroplast</keyword>
<keyword id="KW-0472">Membrane</keyword>
<keyword id="KW-0602">Photosynthesis</keyword>
<keyword id="KW-0603">Photosystem I</keyword>
<keyword id="KW-0934">Plastid</keyword>
<keyword id="KW-0793">Thylakoid</keyword>
<keyword id="KW-0812">Transmembrane</keyword>
<keyword id="KW-1133">Transmembrane helix</keyword>
<feature type="chain" id="PRO_0000354130" description="Photosystem I reaction center subunit IX">
    <location>
        <begin position="1"/>
        <end position="44"/>
    </location>
</feature>
<feature type="transmembrane region" description="Helical" evidence="1">
    <location>
        <begin position="7"/>
        <end position="27"/>
    </location>
</feature>
<geneLocation type="chloroplast"/>
<proteinExistence type="inferred from homology"/>
<organism>
    <name type="scientific">Barbarea verna</name>
    <name type="common">Land cress</name>
    <name type="synonym">Erysimum vernum</name>
    <dbReference type="NCBI Taxonomy" id="50458"/>
    <lineage>
        <taxon>Eukaryota</taxon>
        <taxon>Viridiplantae</taxon>
        <taxon>Streptophyta</taxon>
        <taxon>Embryophyta</taxon>
        <taxon>Tracheophyta</taxon>
        <taxon>Spermatophyta</taxon>
        <taxon>Magnoliopsida</taxon>
        <taxon>eudicotyledons</taxon>
        <taxon>Gunneridae</taxon>
        <taxon>Pentapetalae</taxon>
        <taxon>rosids</taxon>
        <taxon>malvids</taxon>
        <taxon>Brassicales</taxon>
        <taxon>Brassicaceae</taxon>
        <taxon>Cardamineae</taxon>
        <taxon>Barbarea</taxon>
    </lineage>
</organism>
<dbReference type="EMBL" id="AP009370">
    <property type="protein sequence ID" value="BAF50130.1"/>
    <property type="molecule type" value="Genomic_DNA"/>
</dbReference>
<dbReference type="RefSeq" id="YP_001123306.1">
    <property type="nucleotide sequence ID" value="NC_009269.1"/>
</dbReference>
<dbReference type="SMR" id="A4QKC5"/>
<dbReference type="GeneID" id="4961851"/>
<dbReference type="GO" id="GO:0009535">
    <property type="term" value="C:chloroplast thylakoid membrane"/>
    <property type="evidence" value="ECO:0007669"/>
    <property type="project" value="UniProtKB-SubCell"/>
</dbReference>
<dbReference type="GO" id="GO:0009522">
    <property type="term" value="C:photosystem I"/>
    <property type="evidence" value="ECO:0007669"/>
    <property type="project" value="UniProtKB-KW"/>
</dbReference>
<dbReference type="GO" id="GO:0015979">
    <property type="term" value="P:photosynthesis"/>
    <property type="evidence" value="ECO:0007669"/>
    <property type="project" value="UniProtKB-UniRule"/>
</dbReference>
<dbReference type="FunFam" id="1.20.5.510:FF:000001">
    <property type="entry name" value="Photosystem I reaction center subunit IX"/>
    <property type="match status" value="1"/>
</dbReference>
<dbReference type="Gene3D" id="1.20.5.510">
    <property type="entry name" value="Single helix bin"/>
    <property type="match status" value="1"/>
</dbReference>
<dbReference type="HAMAP" id="MF_00522">
    <property type="entry name" value="PSI_PsaJ"/>
    <property type="match status" value="1"/>
</dbReference>
<dbReference type="InterPro" id="IPR002615">
    <property type="entry name" value="PSI_PsaJ"/>
</dbReference>
<dbReference type="InterPro" id="IPR036062">
    <property type="entry name" value="PSI_PsaJ_sf"/>
</dbReference>
<dbReference type="PANTHER" id="PTHR36082">
    <property type="match status" value="1"/>
</dbReference>
<dbReference type="PANTHER" id="PTHR36082:SF2">
    <property type="entry name" value="PHOTOSYSTEM I REACTION CENTER SUBUNIT IX"/>
    <property type="match status" value="1"/>
</dbReference>
<dbReference type="Pfam" id="PF01701">
    <property type="entry name" value="PSI_PsaJ"/>
    <property type="match status" value="1"/>
</dbReference>
<dbReference type="SUPFAM" id="SSF81544">
    <property type="entry name" value="Subunit IX of photosystem I reaction centre, PsaJ"/>
    <property type="match status" value="1"/>
</dbReference>
<sequence length="44" mass="5023">MRDLKTYLSVAPVLSTLWFASLAGLLIEINRLFPDALTFPFFSF</sequence>